<protein>
    <recommendedName>
        <fullName>Probable pectate lyase E</fullName>
        <ecNumber>4.2.2.2</ecNumber>
    </recommendedName>
</protein>
<organism>
    <name type="scientific">Aspergillus oryzae (strain ATCC 42149 / RIB 40)</name>
    <name type="common">Yellow koji mold</name>
    <dbReference type="NCBI Taxonomy" id="510516"/>
    <lineage>
        <taxon>Eukaryota</taxon>
        <taxon>Fungi</taxon>
        <taxon>Dikarya</taxon>
        <taxon>Ascomycota</taxon>
        <taxon>Pezizomycotina</taxon>
        <taxon>Eurotiomycetes</taxon>
        <taxon>Eurotiomycetidae</taxon>
        <taxon>Eurotiales</taxon>
        <taxon>Aspergillaceae</taxon>
        <taxon>Aspergillus</taxon>
        <taxon>Aspergillus subgen. Circumdati</taxon>
    </lineage>
</organism>
<dbReference type="EC" id="4.2.2.2"/>
<dbReference type="EMBL" id="BA000056">
    <property type="protein sequence ID" value="BAE66524.1"/>
    <property type="molecule type" value="Genomic_DNA"/>
</dbReference>
<dbReference type="RefSeq" id="XP_001827657.1">
    <property type="nucleotide sequence ID" value="XM_001827605.1"/>
</dbReference>
<dbReference type="SMR" id="Q2TW49"/>
<dbReference type="STRING" id="510516.Q2TW49"/>
<dbReference type="CAZy" id="PL3">
    <property type="family name" value="Polysaccharide Lyase Family 3"/>
</dbReference>
<dbReference type="EnsemblFungi" id="BAE66524">
    <property type="protein sequence ID" value="BAE66524"/>
    <property type="gene ID" value="AO090010000706"/>
</dbReference>
<dbReference type="GeneID" id="5999791"/>
<dbReference type="KEGG" id="aor:AO090010000706"/>
<dbReference type="VEuPathDB" id="FungiDB:AO090010000706"/>
<dbReference type="HOGENOM" id="CLU_044863_3_1_1"/>
<dbReference type="OMA" id="KCTGQVE"/>
<dbReference type="OrthoDB" id="47320at5052"/>
<dbReference type="Proteomes" id="UP000006564">
    <property type="component" value="Chromosome 8"/>
</dbReference>
<dbReference type="GO" id="GO:0005576">
    <property type="term" value="C:extracellular region"/>
    <property type="evidence" value="ECO:0007669"/>
    <property type="project" value="UniProtKB-SubCell"/>
</dbReference>
<dbReference type="GO" id="GO:0030570">
    <property type="term" value="F:pectate lyase activity"/>
    <property type="evidence" value="ECO:0007669"/>
    <property type="project" value="UniProtKB-EC"/>
</dbReference>
<dbReference type="GO" id="GO:0071555">
    <property type="term" value="P:cell wall organization"/>
    <property type="evidence" value="ECO:0007669"/>
    <property type="project" value="UniProtKB-KW"/>
</dbReference>
<dbReference type="GO" id="GO:0045490">
    <property type="term" value="P:pectin catabolic process"/>
    <property type="evidence" value="ECO:0007669"/>
    <property type="project" value="TreeGrafter"/>
</dbReference>
<dbReference type="Gene3D" id="2.160.20.10">
    <property type="entry name" value="Single-stranded right-handed beta-helix, Pectin lyase-like"/>
    <property type="match status" value="1"/>
</dbReference>
<dbReference type="InterPro" id="IPR004898">
    <property type="entry name" value="Pectate_lyase_PlyH/PlyE-like"/>
</dbReference>
<dbReference type="InterPro" id="IPR012334">
    <property type="entry name" value="Pectin_lyas_fold"/>
</dbReference>
<dbReference type="InterPro" id="IPR011050">
    <property type="entry name" value="Pectin_lyase_fold/virulence"/>
</dbReference>
<dbReference type="PANTHER" id="PTHR33407:SF8">
    <property type="entry name" value="PECTATE LYASE E"/>
    <property type="match status" value="1"/>
</dbReference>
<dbReference type="PANTHER" id="PTHR33407">
    <property type="entry name" value="PECTATE LYASE F-RELATED"/>
    <property type="match status" value="1"/>
</dbReference>
<dbReference type="Pfam" id="PF03211">
    <property type="entry name" value="Pectate_lyase"/>
    <property type="match status" value="1"/>
</dbReference>
<dbReference type="SUPFAM" id="SSF51126">
    <property type="entry name" value="Pectin lyase-like"/>
    <property type="match status" value="1"/>
</dbReference>
<gene>
    <name type="primary">plyE</name>
    <name type="ORF">AO090010000706</name>
</gene>
<comment type="function">
    <text evidence="1">Pectinolytic enzyme consist of four classes of enzymes: pectin lyase, polygalacturonase, pectin methylesterase and rhamnogalacturonase. Among pectinolytic enzymes, pectin lyase is the most important in depolymerization of pectin, since it cleaves internal glycosidic bonds of highly methylated pectins. Favors pectate, the anion, over pectin, the methyl ester (By similarity).</text>
</comment>
<comment type="catalytic activity">
    <reaction>
        <text>Eliminative cleavage of (1-&gt;4)-alpha-D-galacturonan to give oligosaccharides with 4-deoxy-alpha-D-galact-4-enuronosyl groups at their non-reducing ends.</text>
        <dbReference type="EC" id="4.2.2.2"/>
    </reaction>
</comment>
<comment type="cofactor">
    <cofactor evidence="1">
        <name>Ca(2+)</name>
        <dbReference type="ChEBI" id="CHEBI:29108"/>
    </cofactor>
    <text evidence="1">Binds 1 Ca(2+) ion per subunit.</text>
</comment>
<comment type="subcellular location">
    <subcellularLocation>
        <location evidence="1">Secreted</location>
    </subcellularLocation>
</comment>
<comment type="similarity">
    <text evidence="3">Belongs to the polysaccharide lyase 3 family.</text>
</comment>
<evidence type="ECO:0000250" key="1"/>
<evidence type="ECO:0000255" key="2"/>
<evidence type="ECO:0000305" key="3"/>
<accession>Q2TW49</accession>
<keyword id="KW-0106">Calcium</keyword>
<keyword id="KW-0119">Carbohydrate metabolism</keyword>
<keyword id="KW-0961">Cell wall biogenesis/degradation</keyword>
<keyword id="KW-0456">Lyase</keyword>
<keyword id="KW-0624">Polysaccharide degradation</keyword>
<keyword id="KW-1185">Reference proteome</keyword>
<keyword id="KW-0964">Secreted</keyword>
<keyword id="KW-0732">Signal</keyword>
<reference key="1">
    <citation type="journal article" date="2005" name="Nature">
        <title>Genome sequencing and analysis of Aspergillus oryzae.</title>
        <authorList>
            <person name="Machida M."/>
            <person name="Asai K."/>
            <person name="Sano M."/>
            <person name="Tanaka T."/>
            <person name="Kumagai T."/>
            <person name="Terai G."/>
            <person name="Kusumoto K."/>
            <person name="Arima T."/>
            <person name="Akita O."/>
            <person name="Kashiwagi Y."/>
            <person name="Abe K."/>
            <person name="Gomi K."/>
            <person name="Horiuchi H."/>
            <person name="Kitamoto K."/>
            <person name="Kobayashi T."/>
            <person name="Takeuchi M."/>
            <person name="Denning D.W."/>
            <person name="Galagan J.E."/>
            <person name="Nierman W.C."/>
            <person name="Yu J."/>
            <person name="Archer D.B."/>
            <person name="Bennett J.W."/>
            <person name="Bhatnagar D."/>
            <person name="Cleveland T.E."/>
            <person name="Fedorova N.D."/>
            <person name="Gotoh O."/>
            <person name="Horikawa H."/>
            <person name="Hosoyama A."/>
            <person name="Ichinomiya M."/>
            <person name="Igarashi R."/>
            <person name="Iwashita K."/>
            <person name="Juvvadi P.R."/>
            <person name="Kato M."/>
            <person name="Kato Y."/>
            <person name="Kin T."/>
            <person name="Kokubun A."/>
            <person name="Maeda H."/>
            <person name="Maeyama N."/>
            <person name="Maruyama J."/>
            <person name="Nagasaki H."/>
            <person name="Nakajima T."/>
            <person name="Oda K."/>
            <person name="Okada K."/>
            <person name="Paulsen I."/>
            <person name="Sakamoto K."/>
            <person name="Sawano T."/>
            <person name="Takahashi M."/>
            <person name="Takase K."/>
            <person name="Terabayashi Y."/>
            <person name="Wortman J.R."/>
            <person name="Yamada O."/>
            <person name="Yamagata Y."/>
            <person name="Anazawa H."/>
            <person name="Hata Y."/>
            <person name="Koide Y."/>
            <person name="Komori T."/>
            <person name="Koyama Y."/>
            <person name="Minetoki T."/>
            <person name="Suharnan S."/>
            <person name="Tanaka A."/>
            <person name="Isono K."/>
            <person name="Kuhara S."/>
            <person name="Ogasawara N."/>
            <person name="Kikuchi H."/>
        </authorList>
    </citation>
    <scope>NUCLEOTIDE SEQUENCE [LARGE SCALE GENOMIC DNA]</scope>
    <source>
        <strain>ATCC 42149 / RIB 40</strain>
    </source>
</reference>
<name>PLYE_ASPOR</name>
<sequence length="257" mass="27320">MYQKLLLVPLLLTSALASPHDASSHQKFHQLNERAAFPIPASKGSQTFKEPYYVKGTYDGGMKTFGRGVKCTGQKEGGDKDAVFIVADGGILRNAIIGADQIEGVHCEGSCTIENVWWQEVCEDALTFKGTGTGVHKVIGGGAQGADDKVIQHNSGGSAIIQDFTVQNFGKLYRSCGNCKKQFKRTVQISGVKASNGKTLVGINPNLGDSATIDGCASSVKEICVEYEGTDNNGKEPKKAHSGPSNTCKFKEPLASC</sequence>
<feature type="signal peptide" evidence="2">
    <location>
        <begin position="1"/>
        <end position="17"/>
    </location>
</feature>
<feature type="chain" id="PRO_0000394584" description="Probable pectate lyase E">
    <location>
        <begin position="18"/>
        <end position="257"/>
    </location>
</feature>
<proteinExistence type="inferred from homology"/>